<geneLocation type="chloroplast"/>
<dbReference type="EMBL" id="AB197035">
    <property type="protein sequence ID" value="BAE00232.1"/>
    <property type="molecule type" value="Genomic_DNA"/>
</dbReference>
<dbReference type="EMBL" id="AB197035">
    <property type="protein sequence ID" value="BAE00255.1"/>
    <property type="molecule type" value="Genomic_DNA"/>
</dbReference>
<dbReference type="SMR" id="Q2WGC1"/>
<dbReference type="GO" id="GO:0009507">
    <property type="term" value="C:chloroplast"/>
    <property type="evidence" value="ECO:0007669"/>
    <property type="project" value="UniProtKB-SubCell"/>
</dbReference>
<dbReference type="GO" id="GO:1990904">
    <property type="term" value="C:ribonucleoprotein complex"/>
    <property type="evidence" value="ECO:0007669"/>
    <property type="project" value="UniProtKB-KW"/>
</dbReference>
<dbReference type="GO" id="GO:0005840">
    <property type="term" value="C:ribosome"/>
    <property type="evidence" value="ECO:0007669"/>
    <property type="project" value="UniProtKB-KW"/>
</dbReference>
<dbReference type="GO" id="GO:0019843">
    <property type="term" value="F:rRNA binding"/>
    <property type="evidence" value="ECO:0007669"/>
    <property type="project" value="UniProtKB-UniRule"/>
</dbReference>
<dbReference type="GO" id="GO:0003735">
    <property type="term" value="F:structural constituent of ribosome"/>
    <property type="evidence" value="ECO:0007669"/>
    <property type="project" value="InterPro"/>
</dbReference>
<dbReference type="GO" id="GO:0006412">
    <property type="term" value="P:translation"/>
    <property type="evidence" value="ECO:0007669"/>
    <property type="project" value="UniProtKB-UniRule"/>
</dbReference>
<dbReference type="Gene3D" id="3.30.70.330">
    <property type="match status" value="1"/>
</dbReference>
<dbReference type="HAMAP" id="MF_01369_B">
    <property type="entry name" value="Ribosomal_uL23_B"/>
    <property type="match status" value="1"/>
</dbReference>
<dbReference type="InterPro" id="IPR012677">
    <property type="entry name" value="Nucleotide-bd_a/b_plait_sf"/>
</dbReference>
<dbReference type="InterPro" id="IPR013025">
    <property type="entry name" value="Ribosomal_uL23-like"/>
</dbReference>
<dbReference type="InterPro" id="IPR012678">
    <property type="entry name" value="Ribosomal_uL23/eL15/eS24_sf"/>
</dbReference>
<dbReference type="Pfam" id="PF00276">
    <property type="entry name" value="Ribosomal_L23"/>
    <property type="match status" value="1"/>
</dbReference>
<dbReference type="SUPFAM" id="SSF54189">
    <property type="entry name" value="Ribosomal proteins S24e, L23 and L15e"/>
    <property type="match status" value="1"/>
</dbReference>
<comment type="function">
    <text evidence="1">Binds to 23S rRNA.</text>
</comment>
<comment type="subunit">
    <text evidence="1">Part of the 50S ribosomal subunit.</text>
</comment>
<comment type="subcellular location">
    <subcellularLocation>
        <location>Plastid</location>
        <location>Chloroplast</location>
    </subcellularLocation>
</comment>
<comment type="similarity">
    <text evidence="3">Belongs to the universal ribosomal protein uL23 family.</text>
</comment>
<reference key="1">
    <citation type="journal article" date="2007" name="J. Plant Res.">
        <title>The chloroplast genome from a lycophyte (microphyllophyte), Selaginella uncinata, has a unique inversion, transpositions and many gene losses.</title>
        <authorList>
            <person name="Tsuji S."/>
            <person name="Ueda K."/>
            <person name="Nishiyama T."/>
            <person name="Hasebe M."/>
            <person name="Yoshikawa S."/>
            <person name="Konagaya A."/>
            <person name="Nishiuchi T."/>
            <person name="Yamaguchi K."/>
        </authorList>
    </citation>
    <scope>NUCLEOTIDE SEQUENCE [LARGE SCALE GENOMIC DNA]</scope>
</reference>
<protein>
    <recommendedName>
        <fullName evidence="3">Large ribosomal subunit protein uL23cz/uL23cy</fullName>
    </recommendedName>
    <alternativeName>
        <fullName>50S ribosomal protein L23, chloroplastic</fullName>
    </alternativeName>
</protein>
<name>RK23_SELUN</name>
<evidence type="ECO:0000250" key="1"/>
<evidence type="ECO:0000256" key="2">
    <source>
        <dbReference type="SAM" id="MobiDB-lite"/>
    </source>
</evidence>
<evidence type="ECO:0000305" key="3"/>
<sequence>MGGVENPVSTDKAIRLPERKQYSSNAEPNPSKTEVKRRIERFPRVRIVAINSHRLPAGAARGSAGSVTGRRVRRKRMITTLRLNHPIPLFPGKQNGFVS</sequence>
<accession>Q2WGC1</accession>
<keyword id="KW-0150">Chloroplast</keyword>
<keyword id="KW-0934">Plastid</keyword>
<keyword id="KW-0687">Ribonucleoprotein</keyword>
<keyword id="KW-0689">Ribosomal protein</keyword>
<keyword id="KW-0694">RNA-binding</keyword>
<keyword id="KW-0699">rRNA-binding</keyword>
<proteinExistence type="inferred from homology"/>
<organism>
    <name type="scientific">Selaginella uncinata</name>
    <name type="common">Blue spike-moss</name>
    <name type="synonym">Lycopodium uncinatum</name>
    <dbReference type="NCBI Taxonomy" id="307165"/>
    <lineage>
        <taxon>Eukaryota</taxon>
        <taxon>Viridiplantae</taxon>
        <taxon>Streptophyta</taxon>
        <taxon>Embryophyta</taxon>
        <taxon>Tracheophyta</taxon>
        <taxon>Lycopodiopsida</taxon>
        <taxon>Selaginellales</taxon>
        <taxon>Selaginellaceae</taxon>
        <taxon>Selaginella</taxon>
    </lineage>
</organism>
<gene>
    <name type="primary">rpl23-A</name>
</gene>
<gene>
    <name type="primary">rpl23-B</name>
</gene>
<feature type="chain" id="PRO_0000272931" description="Large ribosomal subunit protein uL23cz/uL23cy">
    <location>
        <begin position="1"/>
        <end position="99"/>
    </location>
</feature>
<feature type="region of interest" description="Disordered" evidence="2">
    <location>
        <begin position="1"/>
        <end position="37"/>
    </location>
</feature>
<feature type="compositionally biased region" description="Basic and acidic residues" evidence="2">
    <location>
        <begin position="12"/>
        <end position="21"/>
    </location>
</feature>
<feature type="compositionally biased region" description="Polar residues" evidence="2">
    <location>
        <begin position="22"/>
        <end position="32"/>
    </location>
</feature>